<evidence type="ECO:0000250" key="1"/>
<evidence type="ECO:0000250" key="2">
    <source>
        <dbReference type="UniProtKB" id="P00157"/>
    </source>
</evidence>
<evidence type="ECO:0000255" key="3">
    <source>
        <dbReference type="PROSITE-ProRule" id="PRU00967"/>
    </source>
</evidence>
<evidence type="ECO:0000255" key="4">
    <source>
        <dbReference type="PROSITE-ProRule" id="PRU00968"/>
    </source>
</evidence>
<dbReference type="EMBL" id="AB092610">
    <property type="protein sequence ID" value="BAD80724.1"/>
    <property type="molecule type" value="Genomic_DNA"/>
</dbReference>
<dbReference type="SMR" id="Q5NUR7"/>
<dbReference type="GO" id="GO:0005743">
    <property type="term" value="C:mitochondrial inner membrane"/>
    <property type="evidence" value="ECO:0007669"/>
    <property type="project" value="UniProtKB-SubCell"/>
</dbReference>
<dbReference type="GO" id="GO:0045275">
    <property type="term" value="C:respiratory chain complex III"/>
    <property type="evidence" value="ECO:0007669"/>
    <property type="project" value="InterPro"/>
</dbReference>
<dbReference type="GO" id="GO:0046872">
    <property type="term" value="F:metal ion binding"/>
    <property type="evidence" value="ECO:0007669"/>
    <property type="project" value="UniProtKB-KW"/>
</dbReference>
<dbReference type="GO" id="GO:0008121">
    <property type="term" value="F:ubiquinol-cytochrome-c reductase activity"/>
    <property type="evidence" value="ECO:0007669"/>
    <property type="project" value="InterPro"/>
</dbReference>
<dbReference type="GO" id="GO:0006122">
    <property type="term" value="P:mitochondrial electron transport, ubiquinol to cytochrome c"/>
    <property type="evidence" value="ECO:0007669"/>
    <property type="project" value="TreeGrafter"/>
</dbReference>
<dbReference type="CDD" id="cd00290">
    <property type="entry name" value="cytochrome_b_C"/>
    <property type="match status" value="1"/>
</dbReference>
<dbReference type="CDD" id="cd00284">
    <property type="entry name" value="Cytochrome_b_N"/>
    <property type="match status" value="1"/>
</dbReference>
<dbReference type="FunFam" id="1.20.810.10:FF:000002">
    <property type="entry name" value="Cytochrome b"/>
    <property type="match status" value="1"/>
</dbReference>
<dbReference type="Gene3D" id="1.20.810.10">
    <property type="entry name" value="Cytochrome Bc1 Complex, Chain C"/>
    <property type="match status" value="1"/>
</dbReference>
<dbReference type="InterPro" id="IPR005798">
    <property type="entry name" value="Cyt_b/b6_C"/>
</dbReference>
<dbReference type="InterPro" id="IPR036150">
    <property type="entry name" value="Cyt_b/b6_C_sf"/>
</dbReference>
<dbReference type="InterPro" id="IPR005797">
    <property type="entry name" value="Cyt_b/b6_N"/>
</dbReference>
<dbReference type="InterPro" id="IPR027387">
    <property type="entry name" value="Cytb/b6-like_sf"/>
</dbReference>
<dbReference type="InterPro" id="IPR030689">
    <property type="entry name" value="Cytochrome_b"/>
</dbReference>
<dbReference type="InterPro" id="IPR048260">
    <property type="entry name" value="Cytochrome_b_C_euk/bac"/>
</dbReference>
<dbReference type="InterPro" id="IPR048259">
    <property type="entry name" value="Cytochrome_b_N_euk/bac"/>
</dbReference>
<dbReference type="InterPro" id="IPR016174">
    <property type="entry name" value="Di-haem_cyt_TM"/>
</dbReference>
<dbReference type="PANTHER" id="PTHR19271">
    <property type="entry name" value="CYTOCHROME B"/>
    <property type="match status" value="1"/>
</dbReference>
<dbReference type="PANTHER" id="PTHR19271:SF16">
    <property type="entry name" value="CYTOCHROME B"/>
    <property type="match status" value="1"/>
</dbReference>
<dbReference type="Pfam" id="PF00032">
    <property type="entry name" value="Cytochrom_B_C"/>
    <property type="match status" value="1"/>
</dbReference>
<dbReference type="Pfam" id="PF00033">
    <property type="entry name" value="Cytochrome_B"/>
    <property type="match status" value="1"/>
</dbReference>
<dbReference type="PIRSF" id="PIRSF038885">
    <property type="entry name" value="COB"/>
    <property type="match status" value="1"/>
</dbReference>
<dbReference type="SUPFAM" id="SSF81648">
    <property type="entry name" value="a domain/subunit of cytochrome bc1 complex (Ubiquinol-cytochrome c reductase)"/>
    <property type="match status" value="1"/>
</dbReference>
<dbReference type="SUPFAM" id="SSF81342">
    <property type="entry name" value="Transmembrane di-heme cytochromes"/>
    <property type="match status" value="1"/>
</dbReference>
<dbReference type="PROSITE" id="PS51003">
    <property type="entry name" value="CYTB_CTER"/>
    <property type="match status" value="1"/>
</dbReference>
<dbReference type="PROSITE" id="PS51002">
    <property type="entry name" value="CYTB_NTER"/>
    <property type="match status" value="1"/>
</dbReference>
<feature type="chain" id="PRO_0000255115" description="Cytochrome b">
    <location>
        <begin position="1"/>
        <end position="379"/>
    </location>
</feature>
<feature type="transmembrane region" description="Helical" evidence="2">
    <location>
        <begin position="33"/>
        <end position="53"/>
    </location>
</feature>
<feature type="transmembrane region" description="Helical" evidence="2">
    <location>
        <begin position="77"/>
        <end position="98"/>
    </location>
</feature>
<feature type="transmembrane region" description="Helical" evidence="2">
    <location>
        <begin position="113"/>
        <end position="133"/>
    </location>
</feature>
<feature type="transmembrane region" description="Helical" evidence="2">
    <location>
        <begin position="178"/>
        <end position="198"/>
    </location>
</feature>
<feature type="transmembrane region" description="Helical" evidence="2">
    <location>
        <begin position="226"/>
        <end position="246"/>
    </location>
</feature>
<feature type="transmembrane region" description="Helical" evidence="2">
    <location>
        <begin position="288"/>
        <end position="308"/>
    </location>
</feature>
<feature type="transmembrane region" description="Helical" evidence="2">
    <location>
        <begin position="320"/>
        <end position="340"/>
    </location>
</feature>
<feature type="transmembrane region" description="Helical" evidence="2">
    <location>
        <begin position="347"/>
        <end position="367"/>
    </location>
</feature>
<feature type="binding site" description="axial binding residue" evidence="2">
    <location>
        <position position="83"/>
    </location>
    <ligand>
        <name>heme b</name>
        <dbReference type="ChEBI" id="CHEBI:60344"/>
        <label>b562</label>
    </ligand>
    <ligandPart>
        <name>Fe</name>
        <dbReference type="ChEBI" id="CHEBI:18248"/>
    </ligandPart>
</feature>
<feature type="binding site" description="axial binding residue" evidence="2">
    <location>
        <position position="97"/>
    </location>
    <ligand>
        <name>heme b</name>
        <dbReference type="ChEBI" id="CHEBI:60344"/>
        <label>b566</label>
    </ligand>
    <ligandPart>
        <name>Fe</name>
        <dbReference type="ChEBI" id="CHEBI:18248"/>
    </ligandPart>
</feature>
<feature type="binding site" description="axial binding residue" evidence="2">
    <location>
        <position position="182"/>
    </location>
    <ligand>
        <name>heme b</name>
        <dbReference type="ChEBI" id="CHEBI:60344"/>
        <label>b562</label>
    </ligand>
    <ligandPart>
        <name>Fe</name>
        <dbReference type="ChEBI" id="CHEBI:18248"/>
    </ligandPart>
</feature>
<feature type="binding site" description="axial binding residue" evidence="2">
    <location>
        <position position="196"/>
    </location>
    <ligand>
        <name>heme b</name>
        <dbReference type="ChEBI" id="CHEBI:60344"/>
        <label>b566</label>
    </ligand>
    <ligandPart>
        <name>Fe</name>
        <dbReference type="ChEBI" id="CHEBI:18248"/>
    </ligandPart>
</feature>
<feature type="binding site" evidence="2">
    <location>
        <position position="201"/>
    </location>
    <ligand>
        <name>a ubiquinone</name>
        <dbReference type="ChEBI" id="CHEBI:16389"/>
    </ligand>
</feature>
<reference key="1">
    <citation type="journal article" date="2004" name="Russ. J. Theriol.">
        <title>A preliminary study on molecular phylogeny of giant flying squirrels, genus Petaurista (Rodentis, Sciuridae) based on mitochondrial cytochrome b gene sequences.</title>
        <authorList>
            <person name="Oshida T."/>
            <person name="Shafique C.M."/>
            <person name="Barkati S."/>
            <person name="Fujita Y."/>
            <person name="Lin L.K."/>
            <person name="Masuda R."/>
        </authorList>
    </citation>
    <scope>NUCLEOTIDE SEQUENCE [GENOMIC DNA]</scope>
</reference>
<protein>
    <recommendedName>
        <fullName>Cytochrome b</fullName>
    </recommendedName>
    <alternativeName>
        <fullName>Complex III subunit 3</fullName>
    </alternativeName>
    <alternativeName>
        <fullName>Complex III subunit III</fullName>
    </alternativeName>
    <alternativeName>
        <fullName>Cytochrome b-c1 complex subunit 3</fullName>
    </alternativeName>
    <alternativeName>
        <fullName>Ubiquinol-cytochrome-c reductase complex cytochrome b subunit</fullName>
    </alternativeName>
</protein>
<sequence length="379" mass="42834">MTNIRKTHPLIKIVNHSFIDLPTPSNISAWWNFGSLLGLCLIIQILTGLFLAMHYTSDTMTAFSSVTHICRDVNYGWLIRYMHANGASMFFICLYLHVGRGLYYGSYIYFETWNIGIVLLFAIMATAFMGYVLPWGQMSFWGATVITNLLSAIPYIGTSLVEWIWGGFSVDKATLTRFFAFHFILPFIVAALVMVHLLFLHETGSNNPSGLISDSDKIPFHPYFTIKDILGVLFLTLTLMTLVLFSPDLLGDPDNYTPANPLSTPPHIKPEWYFLFAYAILRSIPNKLGGVLALVFSILILMLSPILHTSKQRSMMFRPLSQCLFWILAADLFTLTWIGGQPVEHPFIIIGQTASILYFSIILIILPLVSSLENKLLKW</sequence>
<comment type="function">
    <text evidence="2">Component of the ubiquinol-cytochrome c reductase complex (complex III or cytochrome b-c1 complex) that is part of the mitochondrial respiratory chain. The b-c1 complex mediates electron transfer from ubiquinol to cytochrome c. Contributes to the generation of a proton gradient across the mitochondrial membrane that is then used for ATP synthesis.</text>
</comment>
<comment type="cofactor">
    <cofactor evidence="2">
        <name>heme b</name>
        <dbReference type="ChEBI" id="CHEBI:60344"/>
    </cofactor>
    <text evidence="2">Binds 2 heme b groups non-covalently.</text>
</comment>
<comment type="subunit">
    <text evidence="2">The cytochrome bc1 complex contains 11 subunits: 3 respiratory subunits (MT-CYB, CYC1 and UQCRFS1), 2 core proteins (UQCRC1 and UQCRC2) and 6 low-molecular weight proteins (UQCRH/QCR6, UQCRB/QCR7, UQCRQ/QCR8, UQCR10/QCR9, UQCR11/QCR10 and a cleavage product of UQCRFS1). This cytochrome bc1 complex then forms a dimer.</text>
</comment>
<comment type="subcellular location">
    <subcellularLocation>
        <location evidence="2">Mitochondrion inner membrane</location>
        <topology evidence="2">Multi-pass membrane protein</topology>
    </subcellularLocation>
</comment>
<comment type="miscellaneous">
    <text evidence="1">Heme 1 (or BL or b562) is low-potential and absorbs at about 562 nm, and heme 2 (or BH or b566) is high-potential and absorbs at about 566 nm.</text>
</comment>
<comment type="similarity">
    <text evidence="3 4">Belongs to the cytochrome b family.</text>
</comment>
<comment type="caution">
    <text evidence="2">The full-length protein contains only eight transmembrane helices, not nine as predicted by bioinformatics tools.</text>
</comment>
<accession>Q5NUR7</accession>
<proteinExistence type="inferred from homology"/>
<organism>
    <name type="scientific">Petaurista elegans</name>
    <name type="common">Spotted giant flying squirrel</name>
    <dbReference type="NCBI Taxonomy" id="135717"/>
    <lineage>
        <taxon>Eukaryota</taxon>
        <taxon>Metazoa</taxon>
        <taxon>Chordata</taxon>
        <taxon>Craniata</taxon>
        <taxon>Vertebrata</taxon>
        <taxon>Euteleostomi</taxon>
        <taxon>Mammalia</taxon>
        <taxon>Eutheria</taxon>
        <taxon>Euarchontoglires</taxon>
        <taxon>Glires</taxon>
        <taxon>Rodentia</taxon>
        <taxon>Sciuromorpha</taxon>
        <taxon>Sciuridae</taxon>
        <taxon>Sciurinae</taxon>
        <taxon>Pteromyini</taxon>
        <taxon>Petaurista</taxon>
    </lineage>
</organism>
<name>CYB_PETEL</name>
<keyword id="KW-0249">Electron transport</keyword>
<keyword id="KW-0349">Heme</keyword>
<keyword id="KW-0408">Iron</keyword>
<keyword id="KW-0472">Membrane</keyword>
<keyword id="KW-0479">Metal-binding</keyword>
<keyword id="KW-0496">Mitochondrion</keyword>
<keyword id="KW-0999">Mitochondrion inner membrane</keyword>
<keyword id="KW-0679">Respiratory chain</keyword>
<keyword id="KW-0812">Transmembrane</keyword>
<keyword id="KW-1133">Transmembrane helix</keyword>
<keyword id="KW-0813">Transport</keyword>
<keyword id="KW-0830">Ubiquinone</keyword>
<geneLocation type="mitochondrion"/>
<gene>
    <name type="primary">MT-CYB</name>
    <name type="synonym">COB</name>
    <name type="synonym">CYTB</name>
    <name type="synonym">MTCYB</name>
</gene>